<proteinExistence type="inferred from homology"/>
<reference key="1">
    <citation type="journal article" date="2005" name="Nature">
        <title>The genome of the social amoeba Dictyostelium discoideum.</title>
        <authorList>
            <person name="Eichinger L."/>
            <person name="Pachebat J.A."/>
            <person name="Gloeckner G."/>
            <person name="Rajandream M.A."/>
            <person name="Sucgang R."/>
            <person name="Berriman M."/>
            <person name="Song J."/>
            <person name="Olsen R."/>
            <person name="Szafranski K."/>
            <person name="Xu Q."/>
            <person name="Tunggal B."/>
            <person name="Kummerfeld S."/>
            <person name="Madera M."/>
            <person name="Konfortov B.A."/>
            <person name="Rivero F."/>
            <person name="Bankier A.T."/>
            <person name="Lehmann R."/>
            <person name="Hamlin N."/>
            <person name="Davies R."/>
            <person name="Gaudet P."/>
            <person name="Fey P."/>
            <person name="Pilcher K."/>
            <person name="Chen G."/>
            <person name="Saunders D."/>
            <person name="Sodergren E.J."/>
            <person name="Davis P."/>
            <person name="Kerhornou A."/>
            <person name="Nie X."/>
            <person name="Hall N."/>
            <person name="Anjard C."/>
            <person name="Hemphill L."/>
            <person name="Bason N."/>
            <person name="Farbrother P."/>
            <person name="Desany B."/>
            <person name="Just E."/>
            <person name="Morio T."/>
            <person name="Rost R."/>
            <person name="Churcher C.M."/>
            <person name="Cooper J."/>
            <person name="Haydock S."/>
            <person name="van Driessche N."/>
            <person name="Cronin A."/>
            <person name="Goodhead I."/>
            <person name="Muzny D.M."/>
            <person name="Mourier T."/>
            <person name="Pain A."/>
            <person name="Lu M."/>
            <person name="Harper D."/>
            <person name="Lindsay R."/>
            <person name="Hauser H."/>
            <person name="James K.D."/>
            <person name="Quiles M."/>
            <person name="Madan Babu M."/>
            <person name="Saito T."/>
            <person name="Buchrieser C."/>
            <person name="Wardroper A."/>
            <person name="Felder M."/>
            <person name="Thangavelu M."/>
            <person name="Johnson D."/>
            <person name="Knights A."/>
            <person name="Loulseged H."/>
            <person name="Mungall K.L."/>
            <person name="Oliver K."/>
            <person name="Price C."/>
            <person name="Quail M.A."/>
            <person name="Urushihara H."/>
            <person name="Hernandez J."/>
            <person name="Rabbinowitsch E."/>
            <person name="Steffen D."/>
            <person name="Sanders M."/>
            <person name="Ma J."/>
            <person name="Kohara Y."/>
            <person name="Sharp S."/>
            <person name="Simmonds M.N."/>
            <person name="Spiegler S."/>
            <person name="Tivey A."/>
            <person name="Sugano S."/>
            <person name="White B."/>
            <person name="Walker D."/>
            <person name="Woodward J.R."/>
            <person name="Winckler T."/>
            <person name="Tanaka Y."/>
            <person name="Shaulsky G."/>
            <person name="Schleicher M."/>
            <person name="Weinstock G.M."/>
            <person name="Rosenthal A."/>
            <person name="Cox E.C."/>
            <person name="Chisholm R.L."/>
            <person name="Gibbs R.A."/>
            <person name="Loomis W.F."/>
            <person name="Platzer M."/>
            <person name="Kay R.R."/>
            <person name="Williams J.G."/>
            <person name="Dear P.H."/>
            <person name="Noegel A.A."/>
            <person name="Barrell B.G."/>
            <person name="Kuspa A."/>
        </authorList>
    </citation>
    <scope>NUCLEOTIDE SEQUENCE [LARGE SCALE GENOMIC DNA]</scope>
    <source>
        <strain>AX4</strain>
    </source>
</reference>
<organism>
    <name type="scientific">Dictyostelium discoideum</name>
    <name type="common">Social amoeba</name>
    <dbReference type="NCBI Taxonomy" id="44689"/>
    <lineage>
        <taxon>Eukaryota</taxon>
        <taxon>Amoebozoa</taxon>
        <taxon>Evosea</taxon>
        <taxon>Eumycetozoa</taxon>
        <taxon>Dictyostelia</taxon>
        <taxon>Dictyosteliales</taxon>
        <taxon>Dictyosteliaceae</taxon>
        <taxon>Dictyostelium</taxon>
    </lineage>
</organism>
<accession>Q54PM7</accession>
<comment type="function">
    <text evidence="1">Converts N-acetylglucosamine (GlcNAc), a major component of complex carbohydrates, into GlcNAc 6-phosphate. Also has ManNAc kinase activity (By similarity).</text>
</comment>
<comment type="catalytic activity">
    <reaction>
        <text>N-acetyl-D-glucosamine + ATP = N-acetyl-D-glucosamine 6-phosphate + ADP + H(+)</text>
        <dbReference type="Rhea" id="RHEA:17417"/>
        <dbReference type="ChEBI" id="CHEBI:15378"/>
        <dbReference type="ChEBI" id="CHEBI:30616"/>
        <dbReference type="ChEBI" id="CHEBI:57513"/>
        <dbReference type="ChEBI" id="CHEBI:456216"/>
        <dbReference type="ChEBI" id="CHEBI:506227"/>
        <dbReference type="EC" id="2.7.1.59"/>
    </reaction>
</comment>
<comment type="subunit">
    <text evidence="1">Homodimer.</text>
</comment>
<comment type="similarity">
    <text evidence="3">Belongs to the eukaryotic-type N-acetylglucosamine kinase family.</text>
</comment>
<comment type="sequence caution" evidence="3">
    <conflict type="erroneous initiation">
        <sequence resource="EMBL-CDS" id="EAL65265"/>
    </conflict>
    <text>Truncated N-terminus.</text>
</comment>
<evidence type="ECO:0000250" key="1"/>
<evidence type="ECO:0000250" key="2">
    <source>
        <dbReference type="UniProtKB" id="Q9UJ70"/>
    </source>
</evidence>
<evidence type="ECO:0000305" key="3"/>
<gene>
    <name type="primary">nagk</name>
    <name type="ORF">DDB_G0284433</name>
</gene>
<name>NAGK_DICDI</name>
<feature type="chain" id="PRO_0000331385" description="N-acetyl-D-glucosamine kinase">
    <location>
        <begin position="1"/>
        <end position="319"/>
    </location>
</feature>
<feature type="binding site" evidence="2">
    <location>
        <position position="14"/>
    </location>
    <ligand>
        <name>ATP</name>
        <dbReference type="ChEBI" id="CHEBI:30616"/>
    </ligand>
</feature>
<feature type="binding site" evidence="2">
    <location>
        <position position="37"/>
    </location>
    <ligand>
        <name>substrate</name>
    </ligand>
</feature>
<feature type="binding site" evidence="2">
    <location>
        <position position="113"/>
    </location>
    <ligand>
        <name>substrate</name>
    </ligand>
</feature>
<feature type="binding site" evidence="2">
    <location>
        <position position="135"/>
    </location>
    <ligand>
        <name>ATP</name>
        <dbReference type="ChEBI" id="CHEBI:30616"/>
    </ligand>
</feature>
<feature type="binding site" evidence="2">
    <location>
        <begin position="153"/>
        <end position="155"/>
    </location>
    <ligand>
        <name>substrate</name>
    </ligand>
</feature>
<feature type="binding site" evidence="2">
    <location>
        <position position="160"/>
    </location>
    <ligand>
        <name>substrate</name>
    </ligand>
</feature>
<feature type="binding site" evidence="2">
    <location>
        <position position="220"/>
    </location>
    <ligand>
        <name>ATP</name>
        <dbReference type="ChEBI" id="CHEBI:30616"/>
    </ligand>
</feature>
<protein>
    <recommendedName>
        <fullName>N-acetyl-D-glucosamine kinase</fullName>
        <shortName>N-acetylglucosamine kinase</shortName>
        <ecNumber>2.7.1.59</ecNumber>
    </recommendedName>
    <alternativeName>
        <fullName>GlcNAc kinase</fullName>
    </alternativeName>
</protein>
<dbReference type="EC" id="2.7.1.59"/>
<dbReference type="EMBL" id="AAFI02000064">
    <property type="protein sequence ID" value="EAL65265.1"/>
    <property type="status" value="ALT_INIT"/>
    <property type="molecule type" value="Genomic_DNA"/>
</dbReference>
<dbReference type="RefSeq" id="XP_638627.1">
    <property type="nucleotide sequence ID" value="XM_633535.1"/>
</dbReference>
<dbReference type="SMR" id="Q54PM7"/>
<dbReference type="FunCoup" id="Q54PM7">
    <property type="interactions" value="104"/>
</dbReference>
<dbReference type="STRING" id="44689.Q54PM7"/>
<dbReference type="PaxDb" id="44689-DDB0186012"/>
<dbReference type="EnsemblProtists" id="EAL65265">
    <property type="protein sequence ID" value="EAL65265"/>
    <property type="gene ID" value="DDB_G0284433"/>
</dbReference>
<dbReference type="GeneID" id="8624598"/>
<dbReference type="KEGG" id="ddi:DDB_G0284433"/>
<dbReference type="dictyBase" id="DDB_G0284433"/>
<dbReference type="VEuPathDB" id="AmoebaDB:DDB_G0284433"/>
<dbReference type="eggNOG" id="KOG1794">
    <property type="taxonomic scope" value="Eukaryota"/>
</dbReference>
<dbReference type="InParanoid" id="Q54PM7"/>
<dbReference type="PhylomeDB" id="Q54PM7"/>
<dbReference type="PRO" id="PR:Q54PM7"/>
<dbReference type="Proteomes" id="UP000002195">
    <property type="component" value="Chromosome 4"/>
</dbReference>
<dbReference type="GO" id="GO:0005524">
    <property type="term" value="F:ATP binding"/>
    <property type="evidence" value="ECO:0007669"/>
    <property type="project" value="UniProtKB-KW"/>
</dbReference>
<dbReference type="GO" id="GO:0045127">
    <property type="term" value="F:N-acetylglucosamine kinase activity"/>
    <property type="evidence" value="ECO:0007669"/>
    <property type="project" value="UniProtKB-EC"/>
</dbReference>
<dbReference type="CDD" id="cd24081">
    <property type="entry name" value="ASKHA_NBD_DdNAGK-like"/>
    <property type="match status" value="1"/>
</dbReference>
<dbReference type="Gene3D" id="3.30.420.40">
    <property type="match status" value="2"/>
</dbReference>
<dbReference type="InterPro" id="IPR002731">
    <property type="entry name" value="ATPase_BadF"/>
</dbReference>
<dbReference type="InterPro" id="IPR043129">
    <property type="entry name" value="ATPase_NBD"/>
</dbReference>
<dbReference type="InterPro" id="IPR052519">
    <property type="entry name" value="Euk-type_GlcNAc_Kinase"/>
</dbReference>
<dbReference type="PANTHER" id="PTHR43190">
    <property type="entry name" value="N-ACETYL-D-GLUCOSAMINE KINASE"/>
    <property type="match status" value="1"/>
</dbReference>
<dbReference type="PANTHER" id="PTHR43190:SF3">
    <property type="entry name" value="N-ACETYL-D-GLUCOSAMINE KINASE"/>
    <property type="match status" value="1"/>
</dbReference>
<dbReference type="Pfam" id="PF01869">
    <property type="entry name" value="BcrAD_BadFG"/>
    <property type="match status" value="1"/>
</dbReference>
<dbReference type="SUPFAM" id="SSF53067">
    <property type="entry name" value="Actin-like ATPase domain"/>
    <property type="match status" value="2"/>
</dbReference>
<sequence length="319" mass="34504">MSKEIFIGIDGGGTKTSTVAVDSNGQELARHTSPCSNYHSVGEDLAKAAINEGIKYVIRKVKETITDDDNKEVTVGSICLGMSGVDREKDKLLVKSWVTELLGESINYSIHNDAIVALSSGTQGKLFGVVIICGTGCISLGFNREGVSGRSGGWGPLLGDYGSGYQIGYDILRHVLKAKDQVGPKTSLTQVLLEKLQLTKEEDLISWAYDPKTQSWQKFAQLSPLAFEQAQLGDEISNLILVDAANALYDLINSVIKKLGLDKEEKFPLVYTGGNIERKGILSDLLSKKIMENYPNAEILNTTCDPSMGAALLALNSKK</sequence>
<keyword id="KW-0067">ATP-binding</keyword>
<keyword id="KW-0418">Kinase</keyword>
<keyword id="KW-0547">Nucleotide-binding</keyword>
<keyword id="KW-1185">Reference proteome</keyword>
<keyword id="KW-0808">Transferase</keyword>